<reference evidence="3" key="1">
    <citation type="journal article" date="1989" name="Comp. Biochem. Physiol.">
        <title>The relationship between N-terminal sequences and immunological characterization of crustacean hemocyanins.</title>
        <authorList>
            <person name="Neuteboom B."/>
            <person name="Sierdsema S.J."/>
            <person name="Beintema J.J."/>
        </authorList>
    </citation>
    <scope>PROTEIN SEQUENCE</scope>
    <source>
        <tissue>Hemolymph</tissue>
    </source>
</reference>
<organism evidence="3">
    <name type="scientific">Cherax destructor</name>
    <name type="common">Common yabby crayfish</name>
    <dbReference type="NCBI Taxonomy" id="6723"/>
    <lineage>
        <taxon>Eukaryota</taxon>
        <taxon>Metazoa</taxon>
        <taxon>Ecdysozoa</taxon>
        <taxon>Arthropoda</taxon>
        <taxon>Crustacea</taxon>
        <taxon>Multicrustacea</taxon>
        <taxon>Malacostraca</taxon>
        <taxon>Eumalacostraca</taxon>
        <taxon>Eucarida</taxon>
        <taxon>Decapoda</taxon>
        <taxon>Pleocyemata</taxon>
        <taxon>Astacidea</taxon>
        <taxon>Parastacoidea</taxon>
        <taxon>Parastacidae</taxon>
        <taxon>Cherax</taxon>
    </lineage>
</organism>
<keyword id="KW-0186">Copper</keyword>
<keyword id="KW-0903">Direct protein sequencing</keyword>
<keyword id="KW-0561">Oxygen transport</keyword>
<keyword id="KW-0964">Secreted</keyword>
<keyword id="KW-0813">Transport</keyword>
<sequence>GVPGDVHDEQKQHDINFLLFKVYEVLXDIXLKXVA</sequence>
<dbReference type="PIR" id="G60529">
    <property type="entry name" value="G60529"/>
</dbReference>
<dbReference type="GO" id="GO:0005576">
    <property type="term" value="C:extracellular region"/>
    <property type="evidence" value="ECO:0007669"/>
    <property type="project" value="UniProtKB-SubCell"/>
</dbReference>
<dbReference type="GO" id="GO:0005344">
    <property type="term" value="F:oxygen carrier activity"/>
    <property type="evidence" value="ECO:0000314"/>
    <property type="project" value="UniProtKB"/>
</dbReference>
<dbReference type="GO" id="GO:0015671">
    <property type="term" value="P:oxygen transport"/>
    <property type="evidence" value="ECO:0000304"/>
    <property type="project" value="UniProtKB"/>
</dbReference>
<protein>
    <recommendedName>
        <fullName>Hemocyanin A chain</fullName>
    </recommendedName>
</protein>
<evidence type="ECO:0000269" key="1">
    <source>
    </source>
</evidence>
<evidence type="ECO:0000303" key="2">
    <source>
    </source>
</evidence>
<evidence type="ECO:0000305" key="3"/>
<comment type="function">
    <text evidence="1">Hemocyanins are copper-containing oxygen carriers occurring freely dissolved in the hemolymph of many mollusks and arthropods.</text>
</comment>
<comment type="subcellular location">
    <subcellularLocation>
        <location>Secreted</location>
        <location>Extracellular space</location>
    </subcellularLocation>
</comment>
<comment type="tissue specificity">
    <text>Hemolymph.</text>
</comment>
<comment type="similarity">
    <text evidence="3">Belongs to the tyrosinase family. Hemocyanin subfamily.</text>
</comment>
<name>HCYA_CHEDE</name>
<accession>P83173</accession>
<feature type="chain" id="PRO_0000204261" description="Hemocyanin A chain">
    <location>
        <begin position="1"/>
        <end position="35" status="greater than"/>
    </location>
</feature>
<feature type="non-terminal residue" evidence="2">
    <location>
        <position position="35"/>
    </location>
</feature>
<proteinExistence type="evidence at protein level"/>